<dbReference type="EMBL" id="Y10494">
    <property type="protein sequence ID" value="CAA71518.1"/>
    <property type="molecule type" value="mRNA"/>
</dbReference>
<dbReference type="EMBL" id="U68482">
    <property type="protein sequence ID" value="AAB70701.1"/>
    <property type="molecule type" value="Genomic_DNA"/>
</dbReference>
<dbReference type="EMBL" id="U68481">
    <property type="protein sequence ID" value="AAB70700.1"/>
    <property type="molecule type" value="mRNA"/>
</dbReference>
<dbReference type="RefSeq" id="NP_999007.1">
    <property type="nucleotide sequence ID" value="NM_213842.1"/>
</dbReference>
<dbReference type="RefSeq" id="XP_005653977.1">
    <property type="nucleotide sequence ID" value="XM_005653920.2"/>
</dbReference>
<dbReference type="SMR" id="O02837"/>
<dbReference type="FunCoup" id="O02837">
    <property type="interactions" value="163"/>
</dbReference>
<dbReference type="STRING" id="9823.ENSSSCP00000066068"/>
<dbReference type="GlyCosmos" id="O02837">
    <property type="glycosylation" value="1 site, No reported glycans"/>
</dbReference>
<dbReference type="GlyGen" id="O02837">
    <property type="glycosylation" value="1 site"/>
</dbReference>
<dbReference type="PaxDb" id="9823-ENSSSCP00000018529"/>
<dbReference type="Ensembl" id="ENSSSCT00015019785.1">
    <property type="protein sequence ID" value="ENSSSCP00015007769.1"/>
    <property type="gene ID" value="ENSSSCG00015014893.1"/>
</dbReference>
<dbReference type="Ensembl" id="ENSSSCT00065008751.1">
    <property type="protein sequence ID" value="ENSSSCP00065003693.1"/>
    <property type="gene ID" value="ENSSSCG00065006472.1"/>
</dbReference>
<dbReference type="GeneID" id="396839"/>
<dbReference type="KEGG" id="ssc:396839"/>
<dbReference type="CTD" id="1440"/>
<dbReference type="eggNOG" id="ENOG502SCNA">
    <property type="taxonomic scope" value="Eukaryota"/>
</dbReference>
<dbReference type="HOGENOM" id="CLU_118367_0_0_1"/>
<dbReference type="InParanoid" id="O02837"/>
<dbReference type="OMA" id="APLEQCH"/>
<dbReference type="OrthoDB" id="9896489at2759"/>
<dbReference type="TreeFam" id="TF337698"/>
<dbReference type="Reactome" id="R-SSC-449836">
    <property type="pathway name" value="Other interleukin signaling"/>
</dbReference>
<dbReference type="Reactome" id="R-SSC-9674555">
    <property type="pathway name" value="Signaling by CSF3 (G-CSF)"/>
</dbReference>
<dbReference type="Reactome" id="R-SSC-9705462">
    <property type="pathway name" value="Inactivation of CSF3 (G-CSF) signaling"/>
</dbReference>
<dbReference type="Proteomes" id="UP000008227">
    <property type="component" value="Unplaced"/>
</dbReference>
<dbReference type="Proteomes" id="UP000314985">
    <property type="component" value="Unplaced"/>
</dbReference>
<dbReference type="Proteomes" id="UP000694570">
    <property type="component" value="Unplaced"/>
</dbReference>
<dbReference type="Proteomes" id="UP000694571">
    <property type="component" value="Unplaced"/>
</dbReference>
<dbReference type="Proteomes" id="UP000694720">
    <property type="component" value="Unplaced"/>
</dbReference>
<dbReference type="Proteomes" id="UP000694722">
    <property type="component" value="Unplaced"/>
</dbReference>
<dbReference type="Proteomes" id="UP000694723">
    <property type="component" value="Unplaced"/>
</dbReference>
<dbReference type="Proteomes" id="UP000694724">
    <property type="component" value="Unplaced"/>
</dbReference>
<dbReference type="Proteomes" id="UP000694725">
    <property type="component" value="Unplaced"/>
</dbReference>
<dbReference type="Proteomes" id="UP000694726">
    <property type="component" value="Unplaced"/>
</dbReference>
<dbReference type="Proteomes" id="UP000694727">
    <property type="component" value="Unplaced"/>
</dbReference>
<dbReference type="Proteomes" id="UP000694728">
    <property type="component" value="Unplaced"/>
</dbReference>
<dbReference type="GO" id="GO:0005615">
    <property type="term" value="C:extracellular space"/>
    <property type="evidence" value="ECO:0000318"/>
    <property type="project" value="GO_Central"/>
</dbReference>
<dbReference type="GO" id="GO:0005125">
    <property type="term" value="F:cytokine activity"/>
    <property type="evidence" value="ECO:0000318"/>
    <property type="project" value="GO_Central"/>
</dbReference>
<dbReference type="GO" id="GO:0005130">
    <property type="term" value="F:granulocyte colony-stimulating factor receptor binding"/>
    <property type="evidence" value="ECO:0000318"/>
    <property type="project" value="GO_Central"/>
</dbReference>
<dbReference type="GO" id="GO:0008083">
    <property type="term" value="F:growth factor activity"/>
    <property type="evidence" value="ECO:0000318"/>
    <property type="project" value="GO_Central"/>
</dbReference>
<dbReference type="GO" id="GO:0006955">
    <property type="term" value="P:immune response"/>
    <property type="evidence" value="ECO:0007669"/>
    <property type="project" value="InterPro"/>
</dbReference>
<dbReference type="GO" id="GO:0008284">
    <property type="term" value="P:positive regulation of cell population proliferation"/>
    <property type="evidence" value="ECO:0000318"/>
    <property type="project" value="GO_Central"/>
</dbReference>
<dbReference type="GO" id="GO:0045639">
    <property type="term" value="P:positive regulation of myeloid cell differentiation"/>
    <property type="evidence" value="ECO:0000318"/>
    <property type="project" value="GO_Central"/>
</dbReference>
<dbReference type="FunFam" id="1.20.1250.10:FF:000021">
    <property type="entry name" value="Granulocyte colony-stimulating factor"/>
    <property type="match status" value="1"/>
</dbReference>
<dbReference type="Gene3D" id="1.20.1250.10">
    <property type="match status" value="1"/>
</dbReference>
<dbReference type="InterPro" id="IPR009079">
    <property type="entry name" value="4_helix_cytokine-like_core"/>
</dbReference>
<dbReference type="InterPro" id="IPR040117">
    <property type="entry name" value="GCSF/MGF"/>
</dbReference>
<dbReference type="InterPro" id="IPR030474">
    <property type="entry name" value="IL-6/GCSF/MGF"/>
</dbReference>
<dbReference type="InterPro" id="IPR030473">
    <property type="entry name" value="IL6/GCSF/MGF_CS"/>
</dbReference>
<dbReference type="PANTHER" id="PTHR10511">
    <property type="entry name" value="GRANULOCYTE COLONY-STIMULATING FACTOR"/>
    <property type="match status" value="1"/>
</dbReference>
<dbReference type="PANTHER" id="PTHR10511:SF2">
    <property type="entry name" value="GRANULOCYTE COLONY-STIMULATING FACTOR"/>
    <property type="match status" value="1"/>
</dbReference>
<dbReference type="Pfam" id="PF16647">
    <property type="entry name" value="GCSF"/>
    <property type="match status" value="1"/>
</dbReference>
<dbReference type="PIRSF" id="PIRSF001935">
    <property type="entry name" value="IL6_MGF_GCSF"/>
    <property type="match status" value="1"/>
</dbReference>
<dbReference type="PRINTS" id="PR00433">
    <property type="entry name" value="IL6GCSFMGF"/>
</dbReference>
<dbReference type="SMART" id="SM00126">
    <property type="entry name" value="IL6"/>
    <property type="match status" value="1"/>
</dbReference>
<dbReference type="SUPFAM" id="SSF47266">
    <property type="entry name" value="4-helical cytokines"/>
    <property type="match status" value="1"/>
</dbReference>
<dbReference type="PROSITE" id="PS00254">
    <property type="entry name" value="INTERLEUKIN_6"/>
    <property type="match status" value="1"/>
</dbReference>
<name>CSF3_PIG</name>
<organism>
    <name type="scientific">Sus scrofa</name>
    <name type="common">Pig</name>
    <dbReference type="NCBI Taxonomy" id="9823"/>
    <lineage>
        <taxon>Eukaryota</taxon>
        <taxon>Metazoa</taxon>
        <taxon>Chordata</taxon>
        <taxon>Craniata</taxon>
        <taxon>Vertebrata</taxon>
        <taxon>Euteleostomi</taxon>
        <taxon>Mammalia</taxon>
        <taxon>Eutheria</taxon>
        <taxon>Laurasiatheria</taxon>
        <taxon>Artiodactyla</taxon>
        <taxon>Suina</taxon>
        <taxon>Suidae</taxon>
        <taxon>Sus</taxon>
    </lineage>
</organism>
<protein>
    <recommendedName>
        <fullName>Granulocyte colony-stimulating factor</fullName>
        <shortName>G-CSF</shortName>
    </recommendedName>
</protein>
<accession>O02837</accession>
<accession>O19180</accession>
<proteinExistence type="evidence at transcript level"/>
<sequence>MKLMALQLLLWHIALWMVPEAAPLSPASSLPQSFLLKCLEQVRKIQADGAELQERLCATHKLCHPQELVLLGHSLGLPQASLSSCSSQALQLTGCLNQLHGGLVLYQGLLQALAGISPELAPALDILQLDVTDLATNIWLQMEDLRMAPASLPTQGTVPTFTSAFQRRAGGVLVVSQLQSFLELAYRVLRYLAEP</sequence>
<comment type="function">
    <text evidence="1">Granulocyte/macrophage colony-stimulating factors are cytokines that act in hematopoiesis by controlling the production, differentiation, and function of 2 related white cell populations of the blood, the granulocytes and the monocytes-macrophages. This CSF induces granulocytes (By similarity).</text>
</comment>
<comment type="subunit">
    <text>Monomer.</text>
</comment>
<comment type="subcellular location">
    <subcellularLocation>
        <location>Secreted</location>
    </subcellularLocation>
</comment>
<comment type="PTM">
    <text evidence="1">O-glycosylated.</text>
</comment>
<comment type="similarity">
    <text evidence="3">Belongs to the IL-6 superfamily.</text>
</comment>
<feature type="signal peptide" evidence="2">
    <location>
        <begin position="1"/>
        <end position="21"/>
    </location>
</feature>
<feature type="chain" id="PRO_0000015572" description="Granulocyte colony-stimulating factor">
    <location>
        <begin position="22"/>
        <end position="195"/>
    </location>
</feature>
<feature type="glycosylation site" description="O-linked (GalNAc...) threonine" evidence="1">
    <location>
        <position position="154"/>
    </location>
</feature>
<feature type="disulfide bond" evidence="1">
    <location>
        <begin position="57"/>
        <end position="63"/>
    </location>
</feature>
<feature type="disulfide bond" evidence="1">
    <location>
        <begin position="85"/>
        <end position="95"/>
    </location>
</feature>
<feature type="sequence conflict" description="In Ref. 1; CAA71518." evidence="3" ref="1">
    <original>A</original>
    <variation>R</variation>
    <location>
        <position position="123"/>
    </location>
</feature>
<evidence type="ECO:0000250" key="1"/>
<evidence type="ECO:0000255" key="2"/>
<evidence type="ECO:0000305" key="3"/>
<reference key="1">
    <citation type="journal article" date="1997" name="Gene">
        <title>Cloning and sequence analysis of the immediate promoter region and cDNA of porcine granulocyte colony-stimulating factor.</title>
        <authorList>
            <person name="Kulmburg P."/>
            <person name="Radke M."/>
            <person name="Mezes B."/>
            <person name="Mertelsmann R."/>
            <person name="Rosenthal F.M."/>
        </authorList>
    </citation>
    <scope>NUCLEOTIDE SEQUENCE [MRNA]</scope>
</reference>
<reference key="2">
    <citation type="submission" date="1997-09" db="EMBL/GenBank/DDBJ databases">
        <title>Cloning of a cDNA and gene encoding porcine granulocyte-colony stimulating factor.</title>
        <authorList>
            <person name="Gloster S.E."/>
            <person name="Sandeman R.M."/>
            <person name="Strom A.D.G."/>
        </authorList>
    </citation>
    <scope>NUCLEOTIDE SEQUENCE [GENOMIC DNA / MRNA]</scope>
    <source>
        <tissue>Liver</tissue>
    </source>
</reference>
<keyword id="KW-0202">Cytokine</keyword>
<keyword id="KW-1015">Disulfide bond</keyword>
<keyword id="KW-0325">Glycoprotein</keyword>
<keyword id="KW-0339">Growth factor</keyword>
<keyword id="KW-1185">Reference proteome</keyword>
<keyword id="KW-0964">Secreted</keyword>
<keyword id="KW-0732">Signal</keyword>
<gene>
    <name type="primary">CSF3</name>
</gene>